<accession>A8M9U2</accession>
<sequence length="282" mass="31120">MVTRKPAVAGMFYEASKDGLINQIKWSIEHELGPKSTMNVKENRQYVLSVIVPHAGYVYSGPVAAHAYVEVGKYIKPKVFVIIGPNHYGVGSPAAIMTSGTWETPLGQVEIDEEVAKQIKAKVKDLAEDPIAFEREHSIEVQVPFIQYLFPGSRIVPIVLWNQTIDLSRRLGSAISEVIDGRAGEVVVVASSDLNHYEPHEVTTDKDMKVIERILNMDEEGFYTVMDKYDVSVCGFGAIMTAIVYSRKQGSTGVKLLKHATSGDTSGYLLETVGYASIAFYK</sequence>
<comment type="similarity">
    <text evidence="1">Belongs to the MEMO1 family.</text>
</comment>
<organism>
    <name type="scientific">Caldivirga maquilingensis (strain ATCC 700844 / DSM 13496 / JCM 10307 / IC-167)</name>
    <dbReference type="NCBI Taxonomy" id="397948"/>
    <lineage>
        <taxon>Archaea</taxon>
        <taxon>Thermoproteota</taxon>
        <taxon>Thermoprotei</taxon>
        <taxon>Thermoproteales</taxon>
        <taxon>Thermoproteaceae</taxon>
        <taxon>Caldivirga</taxon>
    </lineage>
</organism>
<gene>
    <name type="ordered locus">Cmaq_1590</name>
</gene>
<dbReference type="EMBL" id="CP000852">
    <property type="protein sequence ID" value="ABW02413.1"/>
    <property type="molecule type" value="Genomic_DNA"/>
</dbReference>
<dbReference type="RefSeq" id="WP_012186632.1">
    <property type="nucleotide sequence ID" value="NC_009954.1"/>
</dbReference>
<dbReference type="SMR" id="A8M9U2"/>
<dbReference type="STRING" id="397948.Cmaq_1590"/>
<dbReference type="GeneID" id="5709474"/>
<dbReference type="KEGG" id="cma:Cmaq_1590"/>
<dbReference type="eggNOG" id="arCOG01728">
    <property type="taxonomic scope" value="Archaea"/>
</dbReference>
<dbReference type="HOGENOM" id="CLU_038085_2_0_2"/>
<dbReference type="OrthoDB" id="372162at2157"/>
<dbReference type="Proteomes" id="UP000001137">
    <property type="component" value="Chromosome"/>
</dbReference>
<dbReference type="CDD" id="cd07361">
    <property type="entry name" value="MEMO_like"/>
    <property type="match status" value="1"/>
</dbReference>
<dbReference type="Gene3D" id="3.40.830.10">
    <property type="entry name" value="LigB-like"/>
    <property type="match status" value="1"/>
</dbReference>
<dbReference type="HAMAP" id="MF_00055">
    <property type="entry name" value="MEMO1"/>
    <property type="match status" value="1"/>
</dbReference>
<dbReference type="InterPro" id="IPR002737">
    <property type="entry name" value="MEMO1_fam"/>
</dbReference>
<dbReference type="NCBIfam" id="TIGR04336">
    <property type="entry name" value="AmmeMemoSam_B"/>
    <property type="match status" value="1"/>
</dbReference>
<dbReference type="PANTHER" id="PTHR11060">
    <property type="entry name" value="PROTEIN MEMO1"/>
    <property type="match status" value="1"/>
</dbReference>
<dbReference type="PANTHER" id="PTHR11060:SF0">
    <property type="entry name" value="PROTEIN MEMO1"/>
    <property type="match status" value="1"/>
</dbReference>
<dbReference type="Pfam" id="PF01875">
    <property type="entry name" value="Memo"/>
    <property type="match status" value="1"/>
</dbReference>
<dbReference type="SUPFAM" id="SSF53213">
    <property type="entry name" value="LigB-like"/>
    <property type="match status" value="1"/>
</dbReference>
<protein>
    <recommendedName>
        <fullName evidence="1">MEMO1 family protein Cmaq_1590</fullName>
    </recommendedName>
</protein>
<proteinExistence type="inferred from homology"/>
<evidence type="ECO:0000255" key="1">
    <source>
        <dbReference type="HAMAP-Rule" id="MF_00055"/>
    </source>
</evidence>
<reference key="1">
    <citation type="submission" date="2007-10" db="EMBL/GenBank/DDBJ databases">
        <title>Complete sequence of Caldivirga maquilingensis IC-167.</title>
        <authorList>
            <consortium name="US DOE Joint Genome Institute"/>
            <person name="Copeland A."/>
            <person name="Lucas S."/>
            <person name="Lapidus A."/>
            <person name="Barry K."/>
            <person name="Glavina del Rio T."/>
            <person name="Dalin E."/>
            <person name="Tice H."/>
            <person name="Pitluck S."/>
            <person name="Saunders E."/>
            <person name="Brettin T."/>
            <person name="Bruce D."/>
            <person name="Detter J.C."/>
            <person name="Han C."/>
            <person name="Schmutz J."/>
            <person name="Larimer F."/>
            <person name="Land M."/>
            <person name="Hauser L."/>
            <person name="Kyrpides N."/>
            <person name="Ivanova N."/>
            <person name="Biddle J.F."/>
            <person name="Zhang Z."/>
            <person name="Fitz-Gibbon S.T."/>
            <person name="Lowe T.M."/>
            <person name="Saltikov C."/>
            <person name="House C.H."/>
            <person name="Richardson P."/>
        </authorList>
    </citation>
    <scope>NUCLEOTIDE SEQUENCE [LARGE SCALE GENOMIC DNA]</scope>
    <source>
        <strain>ATCC 700844 / DSM 13496 / JCM 10307 / IC-167</strain>
    </source>
</reference>
<feature type="chain" id="PRO_1000074977" description="MEMO1 family protein Cmaq_1590">
    <location>
        <begin position="1"/>
        <end position="282"/>
    </location>
</feature>
<keyword id="KW-1185">Reference proteome</keyword>
<name>Y1590_CALMQ</name>